<name>HELI_HCMVA</name>
<organism>
    <name type="scientific">Human cytomegalovirus (strain AD169)</name>
    <name type="common">HHV-5</name>
    <name type="synonym">Human herpesvirus 5</name>
    <dbReference type="NCBI Taxonomy" id="10360"/>
    <lineage>
        <taxon>Viruses</taxon>
        <taxon>Duplodnaviria</taxon>
        <taxon>Heunggongvirae</taxon>
        <taxon>Peploviricota</taxon>
        <taxon>Herviviricetes</taxon>
        <taxon>Herpesvirales</taxon>
        <taxon>Orthoherpesviridae</taxon>
        <taxon>Betaherpesvirinae</taxon>
        <taxon>Cytomegalovirus</taxon>
        <taxon>Cytomegalovirus humanbeta5</taxon>
        <taxon>Human cytomegalovirus</taxon>
    </lineage>
</organism>
<dbReference type="EC" id="3.6.4.-" evidence="1"/>
<dbReference type="EMBL" id="X17403">
    <property type="protein sequence ID" value="CAA35340.1"/>
    <property type="molecule type" value="Genomic_DNA"/>
</dbReference>
<dbReference type="EMBL" id="BK000394">
    <property type="protein sequence ID" value="DAA00100.1"/>
    <property type="molecule type" value="Genomic_DNA"/>
</dbReference>
<dbReference type="PIR" id="S09869">
    <property type="entry name" value="QQBEK2"/>
</dbReference>
<dbReference type="MINT" id="P16736"/>
<dbReference type="Proteomes" id="UP000008991">
    <property type="component" value="Segment"/>
</dbReference>
<dbReference type="Proteomes" id="UP000008992">
    <property type="component" value="Segment"/>
</dbReference>
<dbReference type="GO" id="GO:0042025">
    <property type="term" value="C:host cell nucleus"/>
    <property type="evidence" value="ECO:0007669"/>
    <property type="project" value="UniProtKB-SubCell"/>
</dbReference>
<dbReference type="GO" id="GO:0005524">
    <property type="term" value="F:ATP binding"/>
    <property type="evidence" value="ECO:0007669"/>
    <property type="project" value="UniProtKB-KW"/>
</dbReference>
<dbReference type="GO" id="GO:0004386">
    <property type="term" value="F:helicase activity"/>
    <property type="evidence" value="ECO:0007669"/>
    <property type="project" value="UniProtKB-KW"/>
</dbReference>
<dbReference type="GO" id="GO:0016787">
    <property type="term" value="F:hydrolase activity"/>
    <property type="evidence" value="ECO:0007669"/>
    <property type="project" value="UniProtKB-KW"/>
</dbReference>
<dbReference type="GO" id="GO:0039686">
    <property type="term" value="P:bidirectional double-stranded viral DNA replication"/>
    <property type="evidence" value="ECO:0000314"/>
    <property type="project" value="UniProtKB"/>
</dbReference>
<dbReference type="GO" id="GO:0006260">
    <property type="term" value="P:DNA replication"/>
    <property type="evidence" value="ECO:0007669"/>
    <property type="project" value="UniProtKB-KW"/>
</dbReference>
<dbReference type="CDD" id="cd18809">
    <property type="entry name" value="SF1_C_RecD"/>
    <property type="match status" value="1"/>
</dbReference>
<dbReference type="Gene3D" id="3.40.50.300">
    <property type="entry name" value="P-loop containing nucleotide triphosphate hydrolases"/>
    <property type="match status" value="1"/>
</dbReference>
<dbReference type="HAMAP" id="MF_04030">
    <property type="entry name" value="HSV_HELI"/>
    <property type="match status" value="1"/>
</dbReference>
<dbReference type="InterPro" id="IPR003840">
    <property type="entry name" value="DNA_helicase_dom"/>
</dbReference>
<dbReference type="InterPro" id="IPR034711">
    <property type="entry name" value="HSV_HELI"/>
</dbReference>
<dbReference type="InterPro" id="IPR027417">
    <property type="entry name" value="P-loop_NTPase"/>
</dbReference>
<dbReference type="Pfam" id="PF02689">
    <property type="entry name" value="Herpes_Helicase"/>
    <property type="match status" value="1"/>
</dbReference>
<dbReference type="SUPFAM" id="SSF52540">
    <property type="entry name" value="P-loop containing nucleoside triphosphate hydrolases"/>
    <property type="match status" value="2"/>
</dbReference>
<comment type="function">
    <text evidence="1">Component of the helicase/primase complex. Unwinds the DNA at the replication forks and generates single-stranded DNA for both leading and lagging strand synthesis. The primase synthesizes short RNA primers on the lagging strand that the polymerase elongates using dNTPs. Possesses helicase-like motifs and therefore may act as the helicase subunit of the complex.</text>
</comment>
<comment type="subunit">
    <text evidence="1">Associates with the primase and the primase-associated factor to form the helicase-primase complex.</text>
</comment>
<comment type="subcellular location">
    <subcellularLocation>
        <location evidence="1">Host nucleus</location>
    </subcellularLocation>
</comment>
<comment type="similarity">
    <text evidence="1">Belongs to the herpesviridae helicase family.</text>
</comment>
<evidence type="ECO:0000255" key="1">
    <source>
        <dbReference type="HAMAP-Rule" id="MF_04030"/>
    </source>
</evidence>
<evidence type="ECO:0000256" key="2">
    <source>
        <dbReference type="SAM" id="MobiDB-lite"/>
    </source>
</evidence>
<accession>P16736</accession>
<accession>Q7M6T4</accession>
<organismHost>
    <name type="scientific">Homo sapiens</name>
    <name type="common">Human</name>
    <dbReference type="NCBI Taxonomy" id="9606"/>
</organismHost>
<reference key="1">
    <citation type="journal article" date="1990" name="Curr. Top. Microbiol. Immunol.">
        <title>Analysis of the protein-coding content of the sequence of human cytomegalovirus strain AD169.</title>
        <authorList>
            <person name="Chee M.S."/>
            <person name="Bankier A.T."/>
            <person name="Beck S."/>
            <person name="Bohni R."/>
            <person name="Brown C.M."/>
            <person name="Cerny R."/>
            <person name="Horsnell T."/>
            <person name="Hutchison C.A. III"/>
            <person name="Kouzarides T."/>
            <person name="Martignetti J.A."/>
            <person name="Preddie E."/>
            <person name="Satchwell S.C."/>
            <person name="Tomlinson P."/>
            <person name="Weston K.M."/>
            <person name="Barrell B.G."/>
        </authorList>
    </citation>
    <scope>NUCLEOTIDE SEQUENCE [LARGE SCALE GENOMIC DNA]</scope>
</reference>
<reference key="2">
    <citation type="journal article" date="2003" name="J. Gen. Virol.">
        <title>The human cytomegalovirus genome revisited: comparison with the chimpanzee cytomegalovirus genome.</title>
        <authorList>
            <person name="Davison A.J."/>
            <person name="Dolan A."/>
            <person name="Akter P."/>
            <person name="Addison C."/>
            <person name="Dargan D.J."/>
            <person name="Alcendor D.J."/>
            <person name="McGeoch D.J."/>
            <person name="Hayward G.S."/>
        </authorList>
    </citation>
    <scope>GENOME REANNOTATION</scope>
</reference>
<reference key="3">
    <citation type="journal article" date="2003" name="J. Gen. Virol.">
        <authorList>
            <person name="Davison A.J."/>
            <person name="Dolan A."/>
            <person name="Akter P."/>
            <person name="Addison C."/>
            <person name="Dargan D.J."/>
            <person name="Alcendor D.J."/>
            <person name="McGeoch D.J."/>
            <person name="Hayward G.S."/>
        </authorList>
    </citation>
    <scope>ERRATUM OF PUBMED:12533697</scope>
</reference>
<sequence length="956" mass="106500">MSMTASSSTPRPTPKYDDALILNLSSAAKIERIVDKVKSLSRERFAPEDFSFQWFRSISRVERTTDNNPSAATTAAATTTVHSSASSSAAAAASSEAGGTRVPCVDRWPFFPFRALLVTGTAGAGKTSSIQVLAANLDCVITGTTVIAAQNLSAILNRTRSAQVKTIYRVFGFVSKHVPLADSAVSHETLERYRVCEPHEETTIQRLQINDLLAYWPVIADIVDKCLNMWERKAASASAAAAAAACEDLSELCESNIIVIDECGLMLRYMLQVVVFFYYFYNALGDTRLYRERRVPCIICVGSPTQTEALESRYDHYTQNKSVRKGVDVLSALIQNEVLINYCDIADNWVMFIHNKRCTDLDFGDLLKYMEFGIPLKEEHVAYVDRFVRPPSSIRNPSYAAEMTRLFLSHVEVQAYFKRLHEQIRLSERHRLFDLPVYCVVNNRAYQELCELADPLGDSPQPVELWFRQNLARIINYSQFVDHNLSSEITKEALRPAADVVATNNSSVQAHGGGGSVIGSTGGNDETAFFQDDDTTTAPDSRETLLTLRITYIKGSSVGVNSKVRACVIGYQGTVERFVDILQKDTFIERTPCEQAAYAYSLVSGLLFSAMYYFYVSPYTTEEMLRELARVELPDVSSLCAAAAATAAAPAWSGGENPINNHVDADSSQGGQSVPVSQRMEHGQEETHDIPCLSNHHDDSDAITDAELMDHTSLYADPFFLKYVKPPSLALLSFEETVHMYTTFRDIFLKRYQLMQRLTGGRFATLPLVTYNRRNVVFKANCQISSQTGSFVGMLSHVSPAQTYTLEGYTSDNVLSLPSDRHRIHPEVVQRGLSRLVLRDALGFLFVLDVNVSRFVESAQGKSLHVCTTVDYGLTSRTAMTIAKSQGLSLEKVAVDFGDHPKNLKMSHIYVAMSRVTDPEHLMMNVNPLRLPYEKNTAITPYICRALKDKRTTLIF</sequence>
<proteinExistence type="inferred from homology"/>
<protein>
    <recommendedName>
        <fullName evidence="1">DNA replication helicase</fullName>
        <ecNumber evidence="1">3.6.4.-</ecNumber>
    </recommendedName>
</protein>
<keyword id="KW-0067">ATP-binding</keyword>
<keyword id="KW-0235">DNA replication</keyword>
<keyword id="KW-0347">Helicase</keyword>
<keyword id="KW-1048">Host nucleus</keyword>
<keyword id="KW-0378">Hydrolase</keyword>
<keyword id="KW-0547">Nucleotide-binding</keyword>
<keyword id="KW-1185">Reference proteome</keyword>
<gene>
    <name evidence="1" type="primary">HELI</name>
    <name type="ordered locus">UL105</name>
</gene>
<feature type="chain" id="PRO_0000115855" description="DNA replication helicase">
    <location>
        <begin position="1"/>
        <end position="956"/>
    </location>
</feature>
<feature type="region of interest" description="Disordered" evidence="2">
    <location>
        <begin position="658"/>
        <end position="694"/>
    </location>
</feature>
<feature type="compositionally biased region" description="Low complexity" evidence="2">
    <location>
        <begin position="667"/>
        <end position="678"/>
    </location>
</feature>
<feature type="compositionally biased region" description="Basic and acidic residues" evidence="2">
    <location>
        <begin position="679"/>
        <end position="694"/>
    </location>
</feature>
<feature type="binding site" evidence="1">
    <location>
        <begin position="120"/>
        <end position="127"/>
    </location>
    <ligand>
        <name>ATP</name>
        <dbReference type="ChEBI" id="CHEBI:30616"/>
    </ligand>
</feature>